<evidence type="ECO:0000250" key="1">
    <source>
        <dbReference type="UniProtKB" id="P0A0L2"/>
    </source>
</evidence>
<evidence type="ECO:0000250" key="2">
    <source>
        <dbReference type="UniProtKB" id="P11064"/>
    </source>
</evidence>
<evidence type="ECO:0000269" key="3">
    <source>
    </source>
</evidence>
<evidence type="ECO:0000269" key="4">
    <source>
    </source>
</evidence>
<evidence type="ECO:0000305" key="5"/>
<protein>
    <recommendedName>
        <fullName>Low molecular weight protein-tyrosine-phosphatase PtpA</fullName>
        <ecNumber>3.1.3.48</ecNumber>
    </recommendedName>
    <alternativeName>
        <fullName>Phosphotyrosine phosphatase A</fullName>
        <shortName>PTPase A</shortName>
    </alternativeName>
</protein>
<dbReference type="EC" id="3.1.3.48"/>
<dbReference type="EMBL" id="AP009351">
    <property type="protein sequence ID" value="BAF68091.1"/>
    <property type="molecule type" value="Genomic_DNA"/>
</dbReference>
<dbReference type="RefSeq" id="WP_000228666.1">
    <property type="nucleotide sequence ID" value="NZ_JBBIAE010000010.1"/>
</dbReference>
<dbReference type="SMR" id="A0A0H3K9F2"/>
<dbReference type="iPTMnet" id="A0A0H3K9F2"/>
<dbReference type="KEGG" id="sae:NWMN_1819"/>
<dbReference type="HOGENOM" id="CLU_071415_2_3_9"/>
<dbReference type="Proteomes" id="UP000006386">
    <property type="component" value="Chromosome"/>
</dbReference>
<dbReference type="GO" id="GO:0005576">
    <property type="term" value="C:extracellular region"/>
    <property type="evidence" value="ECO:0007669"/>
    <property type="project" value="UniProtKB-SubCell"/>
</dbReference>
<dbReference type="GO" id="GO:0004725">
    <property type="term" value="F:protein tyrosine phosphatase activity"/>
    <property type="evidence" value="ECO:0007669"/>
    <property type="project" value="UniProtKB-EC"/>
</dbReference>
<dbReference type="CDD" id="cd16343">
    <property type="entry name" value="LMWPTP"/>
    <property type="match status" value="1"/>
</dbReference>
<dbReference type="FunFam" id="3.40.50.2300:FF:000268">
    <property type="entry name" value="Low molecular weight protein-tyrosine-phosphatase PtpA"/>
    <property type="match status" value="1"/>
</dbReference>
<dbReference type="Gene3D" id="3.40.50.2300">
    <property type="match status" value="1"/>
</dbReference>
<dbReference type="InterPro" id="IPR050438">
    <property type="entry name" value="LMW_PTPase"/>
</dbReference>
<dbReference type="InterPro" id="IPR023485">
    <property type="entry name" value="Ptyr_pPase"/>
</dbReference>
<dbReference type="InterPro" id="IPR036196">
    <property type="entry name" value="Ptyr_pPase_sf"/>
</dbReference>
<dbReference type="InterPro" id="IPR017867">
    <property type="entry name" value="Tyr_phospatase_low_mol_wt"/>
</dbReference>
<dbReference type="PANTHER" id="PTHR11717:SF7">
    <property type="entry name" value="LOW MOLECULAR WEIGHT PHOSPHOTYROSINE PROTEIN PHOSPHATASE"/>
    <property type="match status" value="1"/>
</dbReference>
<dbReference type="PANTHER" id="PTHR11717">
    <property type="entry name" value="LOW MOLECULAR WEIGHT PROTEIN TYROSINE PHOSPHATASE"/>
    <property type="match status" value="1"/>
</dbReference>
<dbReference type="Pfam" id="PF01451">
    <property type="entry name" value="LMWPc"/>
    <property type="match status" value="1"/>
</dbReference>
<dbReference type="PRINTS" id="PR00719">
    <property type="entry name" value="LMWPTPASE"/>
</dbReference>
<dbReference type="SMART" id="SM00226">
    <property type="entry name" value="LMWPc"/>
    <property type="match status" value="1"/>
</dbReference>
<dbReference type="SUPFAM" id="SSF52788">
    <property type="entry name" value="Phosphotyrosine protein phosphatases I"/>
    <property type="match status" value="1"/>
</dbReference>
<proteinExistence type="evidence at protein level"/>
<feature type="chain" id="PRO_0000447641" description="Low molecular weight protein-tyrosine-phosphatase PtpA">
    <location>
        <begin position="1"/>
        <end position="154"/>
    </location>
</feature>
<feature type="active site" description="Nucleophile" evidence="2">
    <location>
        <position position="8"/>
    </location>
</feature>
<feature type="active site" evidence="2">
    <location>
        <position position="14"/>
    </location>
</feature>
<feature type="active site" description="Proton donor" evidence="2">
    <location>
        <position position="120"/>
    </location>
</feature>
<feature type="modified residue" description="Phosphotyrosine" evidence="3">
    <location>
        <position position="122"/>
    </location>
</feature>
<feature type="modified residue" description="Phosphotyrosine" evidence="3">
    <location>
        <position position="123"/>
    </location>
</feature>
<feature type="mutagenesis site" description="Complete loss of activity." evidence="3">
    <original>D</original>
    <variation>A</variation>
    <location>
        <position position="120"/>
    </location>
</feature>
<feature type="mutagenesis site" description="Complete loss of activity; in association with A-123." evidence="3">
    <original>Y</original>
    <variation>A</variation>
    <location>
        <position position="122"/>
    </location>
</feature>
<feature type="mutagenesis site" description="Complete loss of activity; in association with A-122." evidence="3">
    <original>Y</original>
    <variation>A</variation>
    <location>
        <position position="123"/>
    </location>
</feature>
<reference key="1">
    <citation type="journal article" date="2008" name="J. Bacteriol.">
        <title>Genome sequence of Staphylococcus aureus strain Newman and comparative analysis of staphylococcal genomes: polymorphism and evolution of two major pathogenicity islands.</title>
        <authorList>
            <person name="Baba T."/>
            <person name="Bae T."/>
            <person name="Schneewind O."/>
            <person name="Takeuchi F."/>
            <person name="Hiramatsu K."/>
        </authorList>
    </citation>
    <scope>NUCLEOTIDE SEQUENCE [LARGE SCALE GENOMIC DNA]</scope>
    <source>
        <strain>Newman</strain>
    </source>
</reference>
<reference key="2">
    <citation type="journal article" date="2016" name="Biochem. Biophys. Res. Commun.">
        <title>Phosphorylation-mediated regulation of the Staphylococcus aureus secreted tyrosine phosphatase PtpA.</title>
        <authorList>
            <person name="Brelle S."/>
            <person name="Baronian G."/>
            <person name="Huc-Brandt S."/>
            <person name="Zaki L.G."/>
            <person name="Cohen-Gonsaud M."/>
            <person name="Bischoff M."/>
            <person name="Molle V."/>
        </authorList>
    </citation>
    <scope>PHOSPHORYLATION AT TYR-122 AND TYR-123</scope>
    <scope>MUTAGENESIS OF ASP-120; TYR-122 AND TYR-123</scope>
    <scope>SUBCELLULAR LOCATION</scope>
    <scope>CATALYTIC ACTIVITY</scope>
    <source>
        <strain>Newman</strain>
    </source>
</reference>
<reference key="3">
    <citation type="journal article" date="2018" name="J. Biol. Chem.">
        <title>PtpA, a secreted tyrosine phosphatase from Staphylococcus aureus, contributes to virulence and interacts with coronin-1A during infection.</title>
        <authorList>
            <person name="Gannoun-Zaki L."/>
            <person name="Paetzold L."/>
            <person name="Huc-Brandt S."/>
            <person name="Baronian G."/>
            <person name="Elhawy M.I."/>
            <person name="Gaupp R."/>
            <person name="Martin M."/>
            <person name="Blanc-Potard A.B."/>
            <person name="Letourneur F."/>
            <person name="Bischoff M."/>
            <person name="Molle V."/>
        </authorList>
    </citation>
    <scope>FUNCTION</scope>
    <scope>SUBCELLULAR LOCATION</scope>
    <scope>INTERACTION WITH HOST CORO1A</scope>
    <scope>DISRUPTION PHENOTYPE</scope>
    <source>
        <strain>Newman</strain>
    </source>
</reference>
<keyword id="KW-0378">Hydrolase</keyword>
<keyword id="KW-0597">Phosphoprotein</keyword>
<keyword id="KW-0904">Protein phosphatase</keyword>
<keyword id="KW-0964">Secreted</keyword>
<name>PTPA_STAAE</name>
<gene>
    <name type="primary">ptpA</name>
    <name type="ordered locus">NWMN_1819</name>
</gene>
<organism>
    <name type="scientific">Staphylococcus aureus (strain Newman)</name>
    <dbReference type="NCBI Taxonomy" id="426430"/>
    <lineage>
        <taxon>Bacteria</taxon>
        <taxon>Bacillati</taxon>
        <taxon>Bacillota</taxon>
        <taxon>Bacilli</taxon>
        <taxon>Bacillales</taxon>
        <taxon>Staphylococcaceae</taxon>
        <taxon>Staphylococcus</taxon>
    </lineage>
</organism>
<sequence length="154" mass="17491">MVDVAFVCLGNICRSPMAEAIMRQRLKDRNIHDIKVHSRGTGSWNLGEPPHEGTQKILNKHNIPFDGMISELFEATDDFDYIVAMDQSNVDNIKSINPNLKGQLFKLLEFSNMEESDVPDPYYTNNFEGVYDMVLSSCDNLIDYIVKDANLKEG</sequence>
<comment type="function">
    <text evidence="1">Staphylococcal enterotoxin that activates the host immune system by binding as unprocessed molecules to major histocompatibility (MHC) complex class II and T-cell receptor (TCR) molecules. In turn, waves of cellular activation, cytokine production, and migration into the lung tissue and airways occur via alphabeta T-cells. Also causes the intoxication staphylococcal food poisoning syndrome. The illness is characterized by high fever, hypotension, diarrhea, shock, and in some cases death.</text>
</comment>
<comment type="catalytic activity">
    <reaction evidence="3">
        <text>O-phospho-L-tyrosyl-[protein] + H2O = L-tyrosyl-[protein] + phosphate</text>
        <dbReference type="Rhea" id="RHEA:10684"/>
        <dbReference type="Rhea" id="RHEA-COMP:10136"/>
        <dbReference type="Rhea" id="RHEA-COMP:20101"/>
        <dbReference type="ChEBI" id="CHEBI:15377"/>
        <dbReference type="ChEBI" id="CHEBI:43474"/>
        <dbReference type="ChEBI" id="CHEBI:46858"/>
        <dbReference type="ChEBI" id="CHEBI:61978"/>
        <dbReference type="EC" id="3.1.3.48"/>
    </reaction>
</comment>
<comment type="cofactor">
    <cofactor evidence="1">
        <name>Zn(2+)</name>
        <dbReference type="ChEBI" id="CHEBI:29105"/>
    </cofactor>
    <text evidence="1">Binds 1 zinc ion per subunit. The zinc ion is necessary for the toxin interaction with MHC class II.</text>
</comment>
<comment type="subunit">
    <text evidence="1">Monomer. Interacts with MHC class II molecules alpha/HLA-DRB1 and beta/HLA-DRA chains. The interaction with MHC-II molecules occurs at both zinc-dependent and zinc-independent sites. Interacts with T-cell receptor beta variable 7-9/TRBV7-9.</text>
</comment>
<comment type="subcellular location">
    <subcellularLocation>
        <location evidence="1">Secreted</location>
    </subcellularLocation>
</comment>
<comment type="PTM">
    <text evidence="3">Phosphorylations at Tyr-122 and Tyr-123 are essential for phosphatase activity.</text>
</comment>
<comment type="disruption phenotype">
    <text evidence="4">Loss of about 70% of intramacrophage survival.</text>
</comment>
<comment type="similarity">
    <text evidence="5">Belongs to the low molecular weight phosphotyrosine protein phosphatase family.</text>
</comment>
<accession>A0A0H3K9F2</accession>